<sequence length="193" mass="22942">MNFLAHLHLAHLAESSLSGNLLADFVRGNPEESFPPDVVAGIHMHRRIDVLTDNLPEVREAREWFRSETRRVAPITLDVMWDHFLSRHWSQLSPDFPLQEFVCYAREQVMTILPDSPPRFINLNNYLWSEQWLVRYRDMDFIQNVLNGMASRRPRLDALRDSWYDLDAHYDALETRFWQFYPRMMAQASHKAL</sequence>
<feature type="chain" id="PRO_1000070623" description="Acyl carrier protein phosphodiesterase">
    <location>
        <begin position="1"/>
        <end position="193"/>
    </location>
</feature>
<keyword id="KW-0275">Fatty acid biosynthesis</keyword>
<keyword id="KW-0276">Fatty acid metabolism</keyword>
<keyword id="KW-0378">Hydrolase</keyword>
<keyword id="KW-0444">Lipid biosynthesis</keyword>
<keyword id="KW-0443">Lipid metabolism</keyword>
<accession>A7ZX55</accession>
<organism>
    <name type="scientific">Escherichia coli O9:H4 (strain HS)</name>
    <dbReference type="NCBI Taxonomy" id="331112"/>
    <lineage>
        <taxon>Bacteria</taxon>
        <taxon>Pseudomonadati</taxon>
        <taxon>Pseudomonadota</taxon>
        <taxon>Gammaproteobacteria</taxon>
        <taxon>Enterobacterales</taxon>
        <taxon>Enterobacteriaceae</taxon>
        <taxon>Escherichia</taxon>
    </lineage>
</organism>
<evidence type="ECO:0000255" key="1">
    <source>
        <dbReference type="HAMAP-Rule" id="MF_01950"/>
    </source>
</evidence>
<comment type="function">
    <text evidence="1">Converts holo-ACP to apo-ACP by hydrolytic cleavage of the phosphopantetheine prosthetic group from ACP.</text>
</comment>
<comment type="catalytic activity">
    <reaction evidence="1">
        <text>holo-[ACP] + H2O = apo-[ACP] + (R)-4'-phosphopantetheine + H(+)</text>
        <dbReference type="Rhea" id="RHEA:20537"/>
        <dbReference type="Rhea" id="RHEA-COMP:9685"/>
        <dbReference type="Rhea" id="RHEA-COMP:9690"/>
        <dbReference type="ChEBI" id="CHEBI:15377"/>
        <dbReference type="ChEBI" id="CHEBI:15378"/>
        <dbReference type="ChEBI" id="CHEBI:29999"/>
        <dbReference type="ChEBI" id="CHEBI:61723"/>
        <dbReference type="ChEBI" id="CHEBI:64479"/>
        <dbReference type="EC" id="3.1.4.14"/>
    </reaction>
</comment>
<comment type="similarity">
    <text evidence="1">Belongs to the AcpH family.</text>
</comment>
<reference key="1">
    <citation type="journal article" date="2008" name="J. Bacteriol.">
        <title>The pangenome structure of Escherichia coli: comparative genomic analysis of E. coli commensal and pathogenic isolates.</title>
        <authorList>
            <person name="Rasko D.A."/>
            <person name="Rosovitz M.J."/>
            <person name="Myers G.S.A."/>
            <person name="Mongodin E.F."/>
            <person name="Fricke W.F."/>
            <person name="Gajer P."/>
            <person name="Crabtree J."/>
            <person name="Sebaihia M."/>
            <person name="Thomson N.R."/>
            <person name="Chaudhuri R."/>
            <person name="Henderson I.R."/>
            <person name="Sperandio V."/>
            <person name="Ravel J."/>
        </authorList>
    </citation>
    <scope>NUCLEOTIDE SEQUENCE [LARGE SCALE GENOMIC DNA]</scope>
    <source>
        <strain>HS</strain>
    </source>
</reference>
<gene>
    <name evidence="1" type="primary">acpH</name>
    <name type="ordered locus">EcHS_A0474</name>
</gene>
<name>ACPH_ECOHS</name>
<dbReference type="EC" id="3.1.4.14" evidence="1"/>
<dbReference type="EMBL" id="CP000802">
    <property type="protein sequence ID" value="ABV04859.1"/>
    <property type="molecule type" value="Genomic_DNA"/>
</dbReference>
<dbReference type="RefSeq" id="WP_001009884.1">
    <property type="nucleotide sequence ID" value="NC_009800.1"/>
</dbReference>
<dbReference type="SMR" id="A7ZX55"/>
<dbReference type="GeneID" id="93777056"/>
<dbReference type="KEGG" id="ecx:EcHS_A0474"/>
<dbReference type="HOGENOM" id="CLU_099370_1_0_6"/>
<dbReference type="GO" id="GO:0008770">
    <property type="term" value="F:[acyl-carrier-protein] phosphodiesterase activity"/>
    <property type="evidence" value="ECO:0007669"/>
    <property type="project" value="UniProtKB-UniRule"/>
</dbReference>
<dbReference type="GO" id="GO:0006633">
    <property type="term" value="P:fatty acid biosynthetic process"/>
    <property type="evidence" value="ECO:0007669"/>
    <property type="project" value="UniProtKB-UniRule"/>
</dbReference>
<dbReference type="HAMAP" id="MF_01950">
    <property type="entry name" value="AcpH"/>
    <property type="match status" value="1"/>
</dbReference>
<dbReference type="InterPro" id="IPR007431">
    <property type="entry name" value="ACP_PD"/>
</dbReference>
<dbReference type="InterPro" id="IPR023491">
    <property type="entry name" value="ACP_phosphodiesterase_gpbac"/>
</dbReference>
<dbReference type="NCBIfam" id="NF007466">
    <property type="entry name" value="PRK10045.1"/>
    <property type="match status" value="1"/>
</dbReference>
<dbReference type="PANTHER" id="PTHR38764">
    <property type="entry name" value="ACYL CARRIER PROTEIN PHOSPHODIESTERASE"/>
    <property type="match status" value="1"/>
</dbReference>
<dbReference type="PANTHER" id="PTHR38764:SF1">
    <property type="entry name" value="ACYL CARRIER PROTEIN PHOSPHODIESTERASE"/>
    <property type="match status" value="1"/>
</dbReference>
<dbReference type="Pfam" id="PF04336">
    <property type="entry name" value="ACP_PD"/>
    <property type="match status" value="1"/>
</dbReference>
<dbReference type="PIRSF" id="PIRSF011489">
    <property type="entry name" value="DUF479"/>
    <property type="match status" value="1"/>
</dbReference>
<protein>
    <recommendedName>
        <fullName evidence="1">Acyl carrier protein phosphodiesterase</fullName>
        <shortName evidence="1">ACP phosphodiesterase</shortName>
        <ecNumber evidence="1">3.1.4.14</ecNumber>
    </recommendedName>
</protein>
<proteinExistence type="inferred from homology"/>